<sequence>MPKGRRGSQNPKMSQRPAPPLYFPSLYDRGISSSPLSDFNIWKKLFVPLKAGGTPAAGVAGVAGVRSLPLAPPATVPPPPPGLGPPSERPCPPPWPSGLASIPYEPLRFFYSPPPGPEMATSALVPGSTTPWLASASHPEELCELEIRIKELELLTITGDGFDSQRYKFLKALKDEKLQGLKMSRQPGKSASCS</sequence>
<accession>Q9D1Z2</accession>
<proteinExistence type="evidence at transcript level"/>
<keyword id="KW-1185">Reference proteome</keyword>
<dbReference type="EMBL" id="AK020874">
    <property type="protein sequence ID" value="BAB32235.1"/>
    <property type="molecule type" value="mRNA"/>
</dbReference>
<dbReference type="EMBL" id="BX813317">
    <property type="status" value="NOT_ANNOTATED_CDS"/>
    <property type="molecule type" value="Genomic_DNA"/>
</dbReference>
<dbReference type="EMBL" id="BC048438">
    <property type="protein sequence ID" value="AAH48438.1"/>
    <property type="molecule type" value="mRNA"/>
</dbReference>
<dbReference type="CCDS" id="CCDS16488.1"/>
<dbReference type="RefSeq" id="NP_080910.1">
    <property type="nucleotide sequence ID" value="NM_026634.2"/>
</dbReference>
<dbReference type="SMR" id="Q9D1Z2"/>
<dbReference type="STRING" id="10090.ENSMUSP00000044861"/>
<dbReference type="GlyGen" id="Q9D1Z2">
    <property type="glycosylation" value="1 site"/>
</dbReference>
<dbReference type="PhosphoSitePlus" id="Q9D1Z2"/>
<dbReference type="PaxDb" id="10090-ENSMUSP00000044861"/>
<dbReference type="Antibodypedia" id="62997">
    <property type="antibodies" value="21 antibodies from 8 providers"/>
</dbReference>
<dbReference type="Ensembl" id="ENSMUST00000040374.6">
    <property type="protein sequence ID" value="ENSMUSP00000044861.6"/>
    <property type="gene ID" value="ENSMUSG00000032671.6"/>
</dbReference>
<dbReference type="GeneID" id="68243"/>
<dbReference type="KEGG" id="mmu:68243"/>
<dbReference type="UCSC" id="uc008ljp.1">
    <property type="organism name" value="mouse"/>
</dbReference>
<dbReference type="AGR" id="MGI:1915493"/>
<dbReference type="MGI" id="MGI:1915493">
    <property type="gene designation" value="A930018P22Rik"/>
</dbReference>
<dbReference type="VEuPathDB" id="HostDB:ENSMUSG00000032671"/>
<dbReference type="eggNOG" id="ENOG502S5Z2">
    <property type="taxonomic scope" value="Eukaryota"/>
</dbReference>
<dbReference type="GeneTree" id="ENSGT00390000002169"/>
<dbReference type="HOGENOM" id="CLU_1402030_0_0_1"/>
<dbReference type="InParanoid" id="Q9D1Z2"/>
<dbReference type="OMA" id="RCCPPPW"/>
<dbReference type="OrthoDB" id="9938805at2759"/>
<dbReference type="PhylomeDB" id="Q9D1Z2"/>
<dbReference type="TreeFam" id="TF339799"/>
<dbReference type="BioGRID-ORCS" id="68243">
    <property type="hits" value="1 hit in 76 CRISPR screens"/>
</dbReference>
<dbReference type="PRO" id="PR:Q9D1Z2"/>
<dbReference type="Proteomes" id="UP000000589">
    <property type="component" value="Chromosome 2"/>
</dbReference>
<dbReference type="RNAct" id="Q9D1Z2">
    <property type="molecule type" value="protein"/>
</dbReference>
<dbReference type="Bgee" id="ENSMUSG00000032671">
    <property type="expression patterns" value="Expressed in spermatid and 16 other cell types or tissues"/>
</dbReference>
<dbReference type="InterPro" id="IPR040027">
    <property type="entry name" value="C11orf91-like"/>
</dbReference>
<dbReference type="PANTHER" id="PTHR36288">
    <property type="entry name" value="SIMILAR TO RIKEN CDNA A930018P22"/>
    <property type="match status" value="1"/>
</dbReference>
<dbReference type="PANTHER" id="PTHR36288:SF1">
    <property type="entry name" value="SIMILAR TO RIKEN CDNA A930018P22"/>
    <property type="match status" value="1"/>
</dbReference>
<dbReference type="Pfam" id="PF17669">
    <property type="entry name" value="DUF5529"/>
    <property type="match status" value="1"/>
</dbReference>
<feature type="chain" id="PRO_0000340698" description="Uncharacterized protein C11orf91 homolog">
    <location>
        <begin position="1"/>
        <end position="194"/>
    </location>
</feature>
<feature type="region of interest" description="Disordered" evidence="1">
    <location>
        <begin position="1"/>
        <end position="21"/>
    </location>
</feature>
<feature type="region of interest" description="Disordered" evidence="1">
    <location>
        <begin position="73"/>
        <end position="97"/>
    </location>
</feature>
<feature type="compositionally biased region" description="Pro residues" evidence="1">
    <location>
        <begin position="73"/>
        <end position="96"/>
    </location>
</feature>
<organism>
    <name type="scientific">Mus musculus</name>
    <name type="common">Mouse</name>
    <dbReference type="NCBI Taxonomy" id="10090"/>
    <lineage>
        <taxon>Eukaryota</taxon>
        <taxon>Metazoa</taxon>
        <taxon>Chordata</taxon>
        <taxon>Craniata</taxon>
        <taxon>Vertebrata</taxon>
        <taxon>Euteleostomi</taxon>
        <taxon>Mammalia</taxon>
        <taxon>Eutheria</taxon>
        <taxon>Euarchontoglires</taxon>
        <taxon>Glires</taxon>
        <taxon>Rodentia</taxon>
        <taxon>Myomorpha</taxon>
        <taxon>Muroidea</taxon>
        <taxon>Muridae</taxon>
        <taxon>Murinae</taxon>
        <taxon>Mus</taxon>
        <taxon>Mus</taxon>
    </lineage>
</organism>
<protein>
    <recommendedName>
        <fullName>Uncharacterized protein C11orf91 homolog</fullName>
    </recommendedName>
</protein>
<name>CK091_MOUSE</name>
<reference key="1">
    <citation type="journal article" date="2005" name="Science">
        <title>The transcriptional landscape of the mammalian genome.</title>
        <authorList>
            <person name="Carninci P."/>
            <person name="Kasukawa T."/>
            <person name="Katayama S."/>
            <person name="Gough J."/>
            <person name="Frith M.C."/>
            <person name="Maeda N."/>
            <person name="Oyama R."/>
            <person name="Ravasi T."/>
            <person name="Lenhard B."/>
            <person name="Wells C."/>
            <person name="Kodzius R."/>
            <person name="Shimokawa K."/>
            <person name="Bajic V.B."/>
            <person name="Brenner S.E."/>
            <person name="Batalov S."/>
            <person name="Forrest A.R."/>
            <person name="Zavolan M."/>
            <person name="Davis M.J."/>
            <person name="Wilming L.G."/>
            <person name="Aidinis V."/>
            <person name="Allen J.E."/>
            <person name="Ambesi-Impiombato A."/>
            <person name="Apweiler R."/>
            <person name="Aturaliya R.N."/>
            <person name="Bailey T.L."/>
            <person name="Bansal M."/>
            <person name="Baxter L."/>
            <person name="Beisel K.W."/>
            <person name="Bersano T."/>
            <person name="Bono H."/>
            <person name="Chalk A.M."/>
            <person name="Chiu K.P."/>
            <person name="Choudhary V."/>
            <person name="Christoffels A."/>
            <person name="Clutterbuck D.R."/>
            <person name="Crowe M.L."/>
            <person name="Dalla E."/>
            <person name="Dalrymple B.P."/>
            <person name="de Bono B."/>
            <person name="Della Gatta G."/>
            <person name="di Bernardo D."/>
            <person name="Down T."/>
            <person name="Engstrom P."/>
            <person name="Fagiolini M."/>
            <person name="Faulkner G."/>
            <person name="Fletcher C.F."/>
            <person name="Fukushima T."/>
            <person name="Furuno M."/>
            <person name="Futaki S."/>
            <person name="Gariboldi M."/>
            <person name="Georgii-Hemming P."/>
            <person name="Gingeras T.R."/>
            <person name="Gojobori T."/>
            <person name="Green R.E."/>
            <person name="Gustincich S."/>
            <person name="Harbers M."/>
            <person name="Hayashi Y."/>
            <person name="Hensch T.K."/>
            <person name="Hirokawa N."/>
            <person name="Hill D."/>
            <person name="Huminiecki L."/>
            <person name="Iacono M."/>
            <person name="Ikeo K."/>
            <person name="Iwama A."/>
            <person name="Ishikawa T."/>
            <person name="Jakt M."/>
            <person name="Kanapin A."/>
            <person name="Katoh M."/>
            <person name="Kawasawa Y."/>
            <person name="Kelso J."/>
            <person name="Kitamura H."/>
            <person name="Kitano H."/>
            <person name="Kollias G."/>
            <person name="Krishnan S.P."/>
            <person name="Kruger A."/>
            <person name="Kummerfeld S.K."/>
            <person name="Kurochkin I.V."/>
            <person name="Lareau L.F."/>
            <person name="Lazarevic D."/>
            <person name="Lipovich L."/>
            <person name="Liu J."/>
            <person name="Liuni S."/>
            <person name="McWilliam S."/>
            <person name="Madan Babu M."/>
            <person name="Madera M."/>
            <person name="Marchionni L."/>
            <person name="Matsuda H."/>
            <person name="Matsuzawa S."/>
            <person name="Miki H."/>
            <person name="Mignone F."/>
            <person name="Miyake S."/>
            <person name="Morris K."/>
            <person name="Mottagui-Tabar S."/>
            <person name="Mulder N."/>
            <person name="Nakano N."/>
            <person name="Nakauchi H."/>
            <person name="Ng P."/>
            <person name="Nilsson R."/>
            <person name="Nishiguchi S."/>
            <person name="Nishikawa S."/>
            <person name="Nori F."/>
            <person name="Ohara O."/>
            <person name="Okazaki Y."/>
            <person name="Orlando V."/>
            <person name="Pang K.C."/>
            <person name="Pavan W.J."/>
            <person name="Pavesi G."/>
            <person name="Pesole G."/>
            <person name="Petrovsky N."/>
            <person name="Piazza S."/>
            <person name="Reed J."/>
            <person name="Reid J.F."/>
            <person name="Ring B.Z."/>
            <person name="Ringwald M."/>
            <person name="Rost B."/>
            <person name="Ruan Y."/>
            <person name="Salzberg S.L."/>
            <person name="Sandelin A."/>
            <person name="Schneider C."/>
            <person name="Schoenbach C."/>
            <person name="Sekiguchi K."/>
            <person name="Semple C.A."/>
            <person name="Seno S."/>
            <person name="Sessa L."/>
            <person name="Sheng Y."/>
            <person name="Shibata Y."/>
            <person name="Shimada H."/>
            <person name="Shimada K."/>
            <person name="Silva D."/>
            <person name="Sinclair B."/>
            <person name="Sperling S."/>
            <person name="Stupka E."/>
            <person name="Sugiura K."/>
            <person name="Sultana R."/>
            <person name="Takenaka Y."/>
            <person name="Taki K."/>
            <person name="Tammoja K."/>
            <person name="Tan S.L."/>
            <person name="Tang S."/>
            <person name="Taylor M.S."/>
            <person name="Tegner J."/>
            <person name="Teichmann S.A."/>
            <person name="Ueda H.R."/>
            <person name="van Nimwegen E."/>
            <person name="Verardo R."/>
            <person name="Wei C.L."/>
            <person name="Yagi K."/>
            <person name="Yamanishi H."/>
            <person name="Zabarovsky E."/>
            <person name="Zhu S."/>
            <person name="Zimmer A."/>
            <person name="Hide W."/>
            <person name="Bult C."/>
            <person name="Grimmond S.M."/>
            <person name="Teasdale R.D."/>
            <person name="Liu E.T."/>
            <person name="Brusic V."/>
            <person name="Quackenbush J."/>
            <person name="Wahlestedt C."/>
            <person name="Mattick J.S."/>
            <person name="Hume D.A."/>
            <person name="Kai C."/>
            <person name="Sasaki D."/>
            <person name="Tomaru Y."/>
            <person name="Fukuda S."/>
            <person name="Kanamori-Katayama M."/>
            <person name="Suzuki M."/>
            <person name="Aoki J."/>
            <person name="Arakawa T."/>
            <person name="Iida J."/>
            <person name="Imamura K."/>
            <person name="Itoh M."/>
            <person name="Kato T."/>
            <person name="Kawaji H."/>
            <person name="Kawagashira N."/>
            <person name="Kawashima T."/>
            <person name="Kojima M."/>
            <person name="Kondo S."/>
            <person name="Konno H."/>
            <person name="Nakano K."/>
            <person name="Ninomiya N."/>
            <person name="Nishio T."/>
            <person name="Okada M."/>
            <person name="Plessy C."/>
            <person name="Shibata K."/>
            <person name="Shiraki T."/>
            <person name="Suzuki S."/>
            <person name="Tagami M."/>
            <person name="Waki K."/>
            <person name="Watahiki A."/>
            <person name="Okamura-Oho Y."/>
            <person name="Suzuki H."/>
            <person name="Kawai J."/>
            <person name="Hayashizaki Y."/>
        </authorList>
    </citation>
    <scope>NUCLEOTIDE SEQUENCE [LARGE SCALE MRNA]</scope>
    <source>
        <strain>C57BL/6J</strain>
        <tissue>Retina</tissue>
    </source>
</reference>
<reference key="2">
    <citation type="journal article" date="2009" name="PLoS Biol.">
        <title>Lineage-specific biology revealed by a finished genome assembly of the mouse.</title>
        <authorList>
            <person name="Church D.M."/>
            <person name="Goodstadt L."/>
            <person name="Hillier L.W."/>
            <person name="Zody M.C."/>
            <person name="Goldstein S."/>
            <person name="She X."/>
            <person name="Bult C.J."/>
            <person name="Agarwala R."/>
            <person name="Cherry J.L."/>
            <person name="DiCuccio M."/>
            <person name="Hlavina W."/>
            <person name="Kapustin Y."/>
            <person name="Meric P."/>
            <person name="Maglott D."/>
            <person name="Birtle Z."/>
            <person name="Marques A.C."/>
            <person name="Graves T."/>
            <person name="Zhou S."/>
            <person name="Teague B."/>
            <person name="Potamousis K."/>
            <person name="Churas C."/>
            <person name="Place M."/>
            <person name="Herschleb J."/>
            <person name="Runnheim R."/>
            <person name="Forrest D."/>
            <person name="Amos-Landgraf J."/>
            <person name="Schwartz D.C."/>
            <person name="Cheng Z."/>
            <person name="Lindblad-Toh K."/>
            <person name="Eichler E.E."/>
            <person name="Ponting C.P."/>
        </authorList>
    </citation>
    <scope>NUCLEOTIDE SEQUENCE [LARGE SCALE GENOMIC DNA]</scope>
    <source>
        <strain>C57BL/6J</strain>
    </source>
</reference>
<reference key="3">
    <citation type="journal article" date="2004" name="Genome Res.">
        <title>The status, quality, and expansion of the NIH full-length cDNA project: the Mammalian Gene Collection (MGC).</title>
        <authorList>
            <consortium name="The MGC Project Team"/>
        </authorList>
    </citation>
    <scope>NUCLEOTIDE SEQUENCE [LARGE SCALE MRNA]</scope>
    <source>
        <tissue>Testis</tissue>
    </source>
</reference>
<evidence type="ECO:0000256" key="1">
    <source>
        <dbReference type="SAM" id="MobiDB-lite"/>
    </source>
</evidence>